<dbReference type="EMBL" id="CH474061">
    <property type="protein sequence ID" value="EDL86258.1"/>
    <property type="molecule type" value="Genomic_DNA"/>
</dbReference>
<dbReference type="RefSeq" id="NP_001100718.1">
    <property type="nucleotide sequence ID" value="NM_001107248.2"/>
</dbReference>
<dbReference type="BMRB" id="P85972"/>
<dbReference type="SMR" id="P85972"/>
<dbReference type="BioGRID" id="258242">
    <property type="interactions" value="4"/>
</dbReference>
<dbReference type="FunCoup" id="P85972">
    <property type="interactions" value="2652"/>
</dbReference>
<dbReference type="IntAct" id="P85972">
    <property type="interactions" value="4"/>
</dbReference>
<dbReference type="MINT" id="P85972"/>
<dbReference type="STRING" id="10116.ENSRNOP00000074748"/>
<dbReference type="iPTMnet" id="P85972"/>
<dbReference type="PhosphoSitePlus" id="P85972"/>
<dbReference type="SwissPalm" id="P85972"/>
<dbReference type="jPOST" id="P85972"/>
<dbReference type="PaxDb" id="10116-ENSRNOP00000015179"/>
<dbReference type="Ensembl" id="ENSRNOT00000015179.8">
    <property type="protein sequence ID" value="ENSRNOP00000015179.6"/>
    <property type="gene ID" value="ENSRNOG00000010765.8"/>
</dbReference>
<dbReference type="GeneID" id="305679"/>
<dbReference type="KEGG" id="rno:305679"/>
<dbReference type="UCSC" id="RGD:1311217">
    <property type="organism name" value="rat"/>
</dbReference>
<dbReference type="AGR" id="RGD:1311217"/>
<dbReference type="CTD" id="7414"/>
<dbReference type="RGD" id="1311217">
    <property type="gene designation" value="Vcl"/>
</dbReference>
<dbReference type="eggNOG" id="KOG3681">
    <property type="taxonomic scope" value="Eukaryota"/>
</dbReference>
<dbReference type="InParanoid" id="P85972"/>
<dbReference type="PhylomeDB" id="P85972"/>
<dbReference type="TreeFam" id="TF313686"/>
<dbReference type="Reactome" id="R-RNO-114608">
    <property type="pathway name" value="Platelet degranulation"/>
</dbReference>
<dbReference type="Reactome" id="R-RNO-445355">
    <property type="pathway name" value="Smooth Muscle Contraction"/>
</dbReference>
<dbReference type="Reactome" id="R-RNO-5674135">
    <property type="pathway name" value="MAP2K and MAPK activation"/>
</dbReference>
<dbReference type="Reactome" id="R-RNO-6798695">
    <property type="pathway name" value="Neutrophil degranulation"/>
</dbReference>
<dbReference type="Reactome" id="R-RNO-9856530">
    <property type="pathway name" value="High laminar flow shear stress activates signaling by PIEZO1 and PECAM1:CDH5:KDR in endothelial cells"/>
</dbReference>
<dbReference type="Reactome" id="R-RNO-9860927">
    <property type="pathway name" value="Turbulent (oscillatory, disturbed) flow shear stress activates signaling by PIEZO1 and integrins in endothelial cells"/>
</dbReference>
<dbReference type="PRO" id="PR:P85972"/>
<dbReference type="Proteomes" id="UP000002494">
    <property type="component" value="Chromosome 15"/>
</dbReference>
<dbReference type="Proteomes" id="UP000234681">
    <property type="component" value="Chromosome 15"/>
</dbReference>
<dbReference type="GO" id="GO:0015629">
    <property type="term" value="C:actin cytoskeleton"/>
    <property type="evidence" value="ECO:0000266"/>
    <property type="project" value="RGD"/>
</dbReference>
<dbReference type="GO" id="GO:0005884">
    <property type="term" value="C:actin filament"/>
    <property type="evidence" value="ECO:0000314"/>
    <property type="project" value="RGD"/>
</dbReference>
<dbReference type="GO" id="GO:0005912">
    <property type="term" value="C:adherens junction"/>
    <property type="evidence" value="ECO:0000266"/>
    <property type="project" value="RGD"/>
</dbReference>
<dbReference type="GO" id="GO:0005903">
    <property type="term" value="C:brush border"/>
    <property type="evidence" value="ECO:0000250"/>
    <property type="project" value="AgBase"/>
</dbReference>
<dbReference type="GO" id="GO:0042995">
    <property type="term" value="C:cell projection"/>
    <property type="evidence" value="ECO:0007669"/>
    <property type="project" value="UniProtKB-KW"/>
</dbReference>
<dbReference type="GO" id="GO:0044291">
    <property type="term" value="C:cell-cell contact zone"/>
    <property type="evidence" value="ECO:0000266"/>
    <property type="project" value="RGD"/>
</dbReference>
<dbReference type="GO" id="GO:0005911">
    <property type="term" value="C:cell-cell junction"/>
    <property type="evidence" value="ECO:0000266"/>
    <property type="project" value="RGD"/>
</dbReference>
<dbReference type="GO" id="GO:0043034">
    <property type="term" value="C:costamere"/>
    <property type="evidence" value="ECO:0000266"/>
    <property type="project" value="RGD"/>
</dbReference>
<dbReference type="GO" id="GO:0005737">
    <property type="term" value="C:cytoplasm"/>
    <property type="evidence" value="ECO:0000266"/>
    <property type="project" value="RGD"/>
</dbReference>
<dbReference type="GO" id="GO:0005856">
    <property type="term" value="C:cytoskeleton"/>
    <property type="evidence" value="ECO:0000318"/>
    <property type="project" value="GO_Central"/>
</dbReference>
<dbReference type="GO" id="GO:0005916">
    <property type="term" value="C:fascia adherens"/>
    <property type="evidence" value="ECO:0000266"/>
    <property type="project" value="RGD"/>
</dbReference>
<dbReference type="GO" id="GO:0005925">
    <property type="term" value="C:focal adhesion"/>
    <property type="evidence" value="ECO:0000314"/>
    <property type="project" value="RGD"/>
</dbReference>
<dbReference type="GO" id="GO:0090637">
    <property type="term" value="C:inner dense plaque of desmosome"/>
    <property type="evidence" value="ECO:0000250"/>
    <property type="project" value="AgBase"/>
</dbReference>
<dbReference type="GO" id="GO:0014704">
    <property type="term" value="C:intercalated disc"/>
    <property type="evidence" value="ECO:0000314"/>
    <property type="project" value="BHF-UCL"/>
</dbReference>
<dbReference type="GO" id="GO:0090636">
    <property type="term" value="C:outer dense plaque of desmosome"/>
    <property type="evidence" value="ECO:0000250"/>
    <property type="project" value="AgBase"/>
</dbReference>
<dbReference type="GO" id="GO:0005886">
    <property type="term" value="C:plasma membrane"/>
    <property type="evidence" value="ECO:0000266"/>
    <property type="project" value="RGD"/>
</dbReference>
<dbReference type="GO" id="GO:0002102">
    <property type="term" value="C:podosome"/>
    <property type="evidence" value="ECO:0000266"/>
    <property type="project" value="RGD"/>
</dbReference>
<dbReference type="GO" id="GO:0061826">
    <property type="term" value="C:podosome ring"/>
    <property type="evidence" value="ECO:0000266"/>
    <property type="project" value="RGD"/>
</dbReference>
<dbReference type="GO" id="GO:0032991">
    <property type="term" value="C:protein-containing complex"/>
    <property type="evidence" value="ECO:0000266"/>
    <property type="project" value="RGD"/>
</dbReference>
<dbReference type="GO" id="GO:0042383">
    <property type="term" value="C:sarcolemma"/>
    <property type="evidence" value="ECO:0000314"/>
    <property type="project" value="BHF-UCL"/>
</dbReference>
<dbReference type="GO" id="GO:0001725">
    <property type="term" value="C:stress fiber"/>
    <property type="evidence" value="ECO:0000314"/>
    <property type="project" value="RGD"/>
</dbReference>
<dbReference type="GO" id="GO:1990357">
    <property type="term" value="C:terminal web"/>
    <property type="evidence" value="ECO:0000250"/>
    <property type="project" value="AgBase"/>
</dbReference>
<dbReference type="GO" id="GO:0030018">
    <property type="term" value="C:Z disc"/>
    <property type="evidence" value="ECO:0000314"/>
    <property type="project" value="BHF-UCL"/>
</dbReference>
<dbReference type="GO" id="GO:0005915">
    <property type="term" value="C:zonula adherens"/>
    <property type="evidence" value="ECO:0000250"/>
    <property type="project" value="AgBase"/>
</dbReference>
<dbReference type="GO" id="GO:0003779">
    <property type="term" value="F:actin binding"/>
    <property type="evidence" value="ECO:0000266"/>
    <property type="project" value="RGD"/>
</dbReference>
<dbReference type="GO" id="GO:0045294">
    <property type="term" value="F:alpha-catenin binding"/>
    <property type="evidence" value="ECO:0000266"/>
    <property type="project" value="RGD"/>
</dbReference>
<dbReference type="GO" id="GO:0008013">
    <property type="term" value="F:beta-catenin binding"/>
    <property type="evidence" value="ECO:0000318"/>
    <property type="project" value="GO_Central"/>
</dbReference>
<dbReference type="GO" id="GO:0002162">
    <property type="term" value="F:dystroglycan binding"/>
    <property type="evidence" value="ECO:0000266"/>
    <property type="project" value="RGD"/>
</dbReference>
<dbReference type="GO" id="GO:0031267">
    <property type="term" value="F:small GTPase binding"/>
    <property type="evidence" value="ECO:0000353"/>
    <property type="project" value="RGD"/>
</dbReference>
<dbReference type="GO" id="GO:0005198">
    <property type="term" value="F:structural molecule activity"/>
    <property type="evidence" value="ECO:0007669"/>
    <property type="project" value="InterPro"/>
</dbReference>
<dbReference type="GO" id="GO:0031625">
    <property type="term" value="F:ubiquitin protein ligase binding"/>
    <property type="evidence" value="ECO:0000266"/>
    <property type="project" value="RGD"/>
</dbReference>
<dbReference type="GO" id="GO:0034333">
    <property type="term" value="P:adherens junction assembly"/>
    <property type="evidence" value="ECO:0000266"/>
    <property type="project" value="RGD"/>
</dbReference>
<dbReference type="GO" id="GO:0043297">
    <property type="term" value="P:apical junction assembly"/>
    <property type="evidence" value="ECO:0000266"/>
    <property type="project" value="RGD"/>
</dbReference>
<dbReference type="GO" id="GO:0048675">
    <property type="term" value="P:axon extension"/>
    <property type="evidence" value="ECO:0000266"/>
    <property type="project" value="RGD"/>
</dbReference>
<dbReference type="GO" id="GO:0007155">
    <property type="term" value="P:cell adhesion"/>
    <property type="evidence" value="ECO:0000266"/>
    <property type="project" value="RGD"/>
</dbReference>
<dbReference type="GO" id="GO:0090136">
    <property type="term" value="P:epithelial cell-cell adhesion"/>
    <property type="evidence" value="ECO:0000266"/>
    <property type="project" value="RGD"/>
</dbReference>
<dbReference type="GO" id="GO:0030032">
    <property type="term" value="P:lamellipodium assembly"/>
    <property type="evidence" value="ECO:0000266"/>
    <property type="project" value="RGD"/>
</dbReference>
<dbReference type="GO" id="GO:0002009">
    <property type="term" value="P:morphogenesis of an epithelium"/>
    <property type="evidence" value="ECO:0000266"/>
    <property type="project" value="RGD"/>
</dbReference>
<dbReference type="GO" id="GO:0034394">
    <property type="term" value="P:protein localization to cell surface"/>
    <property type="evidence" value="ECO:0000266"/>
    <property type="project" value="RGD"/>
</dbReference>
<dbReference type="GO" id="GO:0030334">
    <property type="term" value="P:regulation of cell migration"/>
    <property type="evidence" value="ECO:0000266"/>
    <property type="project" value="RGD"/>
</dbReference>
<dbReference type="GO" id="GO:1903140">
    <property type="term" value="P:regulation of establishment of endothelial barrier"/>
    <property type="evidence" value="ECO:0000266"/>
    <property type="project" value="RGD"/>
</dbReference>
<dbReference type="GO" id="GO:0051893">
    <property type="term" value="P:regulation of focal adhesion assembly"/>
    <property type="evidence" value="ECO:0000266"/>
    <property type="project" value="RGD"/>
</dbReference>
<dbReference type="GO" id="GO:1904702">
    <property type="term" value="P:regulation of protein localization to adherens junction"/>
    <property type="evidence" value="ECO:0000266"/>
    <property type="project" value="RGD"/>
</dbReference>
<dbReference type="FunFam" id="1.20.120.230:FF:000041">
    <property type="entry name" value="Vinculin"/>
    <property type="match status" value="1"/>
</dbReference>
<dbReference type="FunFam" id="1.20.120.230:FF:000010">
    <property type="entry name" value="Vinculin a"/>
    <property type="match status" value="1"/>
</dbReference>
<dbReference type="FunFam" id="1.20.120.810:FF:000001">
    <property type="entry name" value="Vinculin a"/>
    <property type="match status" value="1"/>
</dbReference>
<dbReference type="FunFam" id="1.20.120.230:FF:000013">
    <property type="entry name" value="Vinculin b"/>
    <property type="match status" value="1"/>
</dbReference>
<dbReference type="FunFam" id="1.20.120.810:FF:000002">
    <property type="entry name" value="Vinculin b"/>
    <property type="match status" value="1"/>
</dbReference>
<dbReference type="FunFam" id="1.20.120.810:FF:000003">
    <property type="entry name" value="Vinculin b"/>
    <property type="match status" value="1"/>
</dbReference>
<dbReference type="Gene3D" id="1.20.120.230">
    <property type="entry name" value="Alpha-catenin/vinculin-like"/>
    <property type="match status" value="2"/>
</dbReference>
<dbReference type="Gene3D" id="1.20.120.810">
    <property type="entry name" value="Vinculin, Vh2 four-helix bundle"/>
    <property type="match status" value="3"/>
</dbReference>
<dbReference type="InterPro" id="IPR036723">
    <property type="entry name" value="Alpha-catenin/vinculin-like_sf"/>
</dbReference>
<dbReference type="InterPro" id="IPR017997">
    <property type="entry name" value="Vinculin"/>
</dbReference>
<dbReference type="InterPro" id="IPR006077">
    <property type="entry name" value="Vinculin/catenin"/>
</dbReference>
<dbReference type="InterPro" id="IPR000633">
    <property type="entry name" value="Vinculin_CS"/>
</dbReference>
<dbReference type="PANTHER" id="PTHR46180">
    <property type="entry name" value="VINCULIN"/>
    <property type="match status" value="1"/>
</dbReference>
<dbReference type="Pfam" id="PF01044">
    <property type="entry name" value="Vinculin"/>
    <property type="match status" value="1"/>
</dbReference>
<dbReference type="PRINTS" id="PR00806">
    <property type="entry name" value="VINCULIN"/>
</dbReference>
<dbReference type="SUPFAM" id="SSF47220">
    <property type="entry name" value="alpha-catenin/vinculin-like"/>
    <property type="match status" value="6"/>
</dbReference>
<dbReference type="PROSITE" id="PS00663">
    <property type="entry name" value="VINCULIN_1"/>
    <property type="match status" value="1"/>
</dbReference>
<dbReference type="PROSITE" id="PS00664">
    <property type="entry name" value="VINCULIN_2"/>
    <property type="match status" value="3"/>
</dbReference>
<sequence length="1066" mass="116615">MPVFHTRTIESILEPVAQQISHLVIMHEEGEVDGKAIPDLTAPVAAVQAAVSNLVRVGKETVQTTEDQILKRDMPPAFIKVENACTKLVQAAQMLQSDPYSVPARDYLIDGSRGILSGTSDLLLTFDEAEVRKIIRVCKGILEYLTVAEVVETMEDLVTYTKNLGPGMTKMAKMIDERQQELTHQEHRVMLVNSMNTVKELLPVLISAMKIFVTTKNSKNQGIEEALKNRNFTVGKMSAEINEIIRVLQLTSWDEDAWASKDTEAMKRALASIDSKLNQAKGWLRDPNASPGDAGEQAIRQILDEAGKVGELCAGKERREILGTCKMLGQMTDQVADLRARGQGASPVAMQKAQQVSQGLDVLTAKVENAARKLEAMTNSKQSIAKKIDAAQNWLADPNGGPEGEEQIRGALAEARKIAELCDDPKERDDILRSLGEIAALTSKLGDLRRQGKGDSPEARALAKQVATALQNLQTKTNRAVANSRPAKAAVHLEGKIEQAQRWIDNPTVDDRGVGQAAIRGLVAEGHRLANVMMGPYRQDLLAKCDRVDQLAAQLADLAARGEGESPQARALASQLQDSLKDLKTQMQEAMTQEVSDVFSDTTTPIKLLAVAATAPPDAPNREEVFDERAANFENHSGRLGATAEKAAAVGAANKSTVEGIQASVKTARELTPQVISAARILLRNPGNQAAYEHFETMKNQWIDNVEKMTGLVDEAIDTKSLLDASEEAIKKDLDKCKVAMANIQPQMLVAGATSIARRANRILLVAKREVENSEDPKFREAVKAASDELSKTISPMVMDAKAVAGNISDPGLQKSFLDSGYRILGAVAKVREAFQPQEPDFPPPPPDLEQLRLTDELAPPKPPLPEGEVPPPRPPPPEEKDEEFPEQKAGEVINQPMMMAARQLHDEARKWSSKGNDIIAAAKRMALLMAEMSRLVRGGSGTKRALIQCAKDIAKASDEVTRLAKEVAKQCTDKRIRTNLLQVCERIPTISTQLKILSTVKATMLGRTNISDEESEQATEMLVHNAQNLMQSVKETVREAEAASIKIRTDAGFTLRWVRKTPWYQ</sequence>
<proteinExistence type="evidence at protein level"/>
<organism>
    <name type="scientific">Rattus norvegicus</name>
    <name type="common">Rat</name>
    <dbReference type="NCBI Taxonomy" id="10116"/>
    <lineage>
        <taxon>Eukaryota</taxon>
        <taxon>Metazoa</taxon>
        <taxon>Chordata</taxon>
        <taxon>Craniata</taxon>
        <taxon>Vertebrata</taxon>
        <taxon>Euteleostomi</taxon>
        <taxon>Mammalia</taxon>
        <taxon>Eutheria</taxon>
        <taxon>Euarchontoglires</taxon>
        <taxon>Glires</taxon>
        <taxon>Rodentia</taxon>
        <taxon>Myomorpha</taxon>
        <taxon>Muroidea</taxon>
        <taxon>Muridae</taxon>
        <taxon>Murinae</taxon>
        <taxon>Rattus</taxon>
    </lineage>
</organism>
<evidence type="ECO:0000250" key="1">
    <source>
        <dbReference type="UniProtKB" id="P12003"/>
    </source>
</evidence>
<evidence type="ECO:0000250" key="2">
    <source>
        <dbReference type="UniProtKB" id="P18206"/>
    </source>
</evidence>
<evidence type="ECO:0000250" key="3">
    <source>
        <dbReference type="UniProtKB" id="Q64727"/>
    </source>
</evidence>
<evidence type="ECO:0000255" key="4"/>
<evidence type="ECO:0000256" key="5">
    <source>
        <dbReference type="SAM" id="MobiDB-lite"/>
    </source>
</evidence>
<evidence type="ECO:0000269" key="6">
    <source>
    </source>
</evidence>
<evidence type="ECO:0000305" key="7"/>
<evidence type="ECO:0007744" key="8">
    <source>
    </source>
</evidence>
<evidence type="ECO:0007744" key="9">
    <source>
    </source>
</evidence>
<comment type="function">
    <text evidence="2">Actin filament (F-actin)-binding protein involved in cell-matrix adhesion and cell-cell adhesion. Regulates cell-surface E-cadherin expression and potentiates mechanosensing by the E-cadherin complex. May also play important roles in cell morphology and locomotion.</text>
</comment>
<comment type="subunit">
    <text evidence="1 2 3">Exhibits self-association properties. Part of a complex composed of THSD1, PTK2/FAK1, TLN1 and VCL (By similarity). Interacts with APBB1IP, NRAP and TLN1. Interacts with CTNNB1 and this interaction is necessary for its localization to the cell-cell junctions and for its function in regulating cell surface expression of E-cadherin (By similarity). Interacts with SORBS1 (By similarity). Interacts with SYNM (By similarity). Interacts with CTNNA1 (By similarity). Binds to ACTN4; this interaction triggers conformational changes (By similarity). Interacts with FLII (By similarity).</text>
</comment>
<comment type="subcellular location">
    <subcellularLocation>
        <location evidence="1">Cell membrane</location>
        <topology evidence="1">Peripheral membrane protein</topology>
        <orientation evidence="1">Cytoplasmic side</orientation>
    </subcellularLocation>
    <subcellularLocation>
        <location evidence="1">Cell junction</location>
        <location evidence="1">Adherens junction</location>
    </subcellularLocation>
    <subcellularLocation>
        <location evidence="1">Cell junction</location>
        <location evidence="1">Focal adhesion</location>
    </subcellularLocation>
    <subcellularLocation>
        <location evidence="6">Cytoplasm</location>
        <location evidence="6">Cytoskeleton</location>
    </subcellularLocation>
    <subcellularLocation>
        <location evidence="3">Cell membrane</location>
        <location evidence="3">Sarcolemma</location>
        <topology evidence="3">Peripheral membrane protein</topology>
        <orientation evidence="3">Cytoplasmic side</orientation>
    </subcellularLocation>
    <subcellularLocation>
        <location evidence="3">Cell projection</location>
        <location evidence="3">Podosome</location>
    </subcellularLocation>
    <text evidence="1">Recruitment to cell-cell junctions occurs in a myosin II-dependent manner. Interaction with CTNNB1 is necessary for its localization to the cell-cell junctions.</text>
</comment>
<comment type="domain">
    <text evidence="2">Exists in at least two conformations. When in the closed, 'inactive' conformation, extensive interactions between the head and tail domains prevent detectable binding to most of its ligands. It takes on an 'active' conformation after cooperative and simultaneous binding of two different ligands. This activation involves displacement of the head-tail interactions and leads to a significant accumulation of ternary complexes. The active form then binds a number of proteins that have both signaling and structural roles that are essential for cell adhesion.</text>
</comment>
<comment type="domain">
    <text evidence="2">The N-terminal globular head (Vh) comprises of subdomains D1-D4. The C-terminal tail (Vt) binds F-actin and cross-links actin filaments into bundles. An intramolecular interaction between Vh and Vt masks the F-actin-binding domain located in Vt. The binding of talin and alpha-actinin to the D1 subdomain of vinculin induces a helical bundle conversion of this subdomain, leading to the disruption of the intramolecular interaction and the exposure of the cryptic F-actin-binding domain of Vt. Vt inhibits actin filament barbed end elongation without affecting the critical concentration of actin assembly.</text>
</comment>
<comment type="PTM">
    <text evidence="1">Phosphorylated; on serines, threonines and tyrosines. Phosphorylation on Tyr-1065 in activated platelets affects head-tail interactions and cell spreading but has no effect on actin binding nor on localization to focal adhesion plaques (By similarity).</text>
</comment>
<comment type="PTM">
    <text evidence="1">Acetylated; mainly by myristic acid but also by a small amount of palmitic acid.</text>
</comment>
<comment type="similarity">
    <text evidence="4">Belongs to the vinculin/alpha-catenin family.</text>
</comment>
<reference evidence="7" key="1">
    <citation type="submission" date="2005-07" db="EMBL/GenBank/DDBJ databases">
        <authorList>
            <person name="Mural R.J."/>
            <person name="Adams M.D."/>
            <person name="Myers E.W."/>
            <person name="Smith H.O."/>
            <person name="Venter J.C."/>
        </authorList>
    </citation>
    <scope>NUCLEOTIDE SEQUENCE [LARGE SCALE GENOMIC DNA]</scope>
</reference>
<reference key="2">
    <citation type="journal article" date="2006" name="Proc. Natl. Acad. Sci. U.S.A.">
        <title>Quantitative phosphoproteomics of vasopressin-sensitive renal cells: regulation of aquaporin-2 phosphorylation at two sites.</title>
        <authorList>
            <person name="Hoffert J.D."/>
            <person name="Pisitkun T."/>
            <person name="Wang G."/>
            <person name="Shen R.-F."/>
            <person name="Knepper M.A."/>
        </authorList>
    </citation>
    <scope>PHOSPHORYLATION [LARGE SCALE ANALYSIS] AT SER-290</scope>
    <scope>IDENTIFICATION BY MASS SPECTROMETRY [LARGE SCALE ANALYSIS]</scope>
</reference>
<reference key="3">
    <citation type="journal article" date="2009" name="Proteomics">
        <title>Proteome profile of the mature rat olfactory bulb.</title>
        <authorList>
            <person name="Maurya D.K."/>
            <person name="Sundaram C.S."/>
            <person name="Bhargava P."/>
        </authorList>
    </citation>
    <scope>IDENTIFICATION BY MASS SPECTROMETRY</scope>
    <scope>SUBCELLULAR LOCATION</scope>
</reference>
<reference key="4">
    <citation type="journal article" date="2012" name="Nat. Commun.">
        <title>Quantitative maps of protein phosphorylation sites across 14 different rat organs and tissues.</title>
        <authorList>
            <person name="Lundby A."/>
            <person name="Secher A."/>
            <person name="Lage K."/>
            <person name="Nordsborg N.B."/>
            <person name="Dmytriyev A."/>
            <person name="Lundby C."/>
            <person name="Olsen J.V."/>
        </authorList>
    </citation>
    <scope>PHOSPHORYLATION [LARGE SCALE ANALYSIS] AT SER-97; SER-260; SER-272; SER-275; SER-290; SER-346; SER-434; SER-574; SER-579; SER-721; SER-795 AND TYR-822</scope>
    <scope>IDENTIFICATION BY MASS SPECTROMETRY [LARGE SCALE ANALYSIS]</scope>
</reference>
<accession>P85972</accession>
<accession>A6KKR4</accession>
<keyword id="KW-0007">Acetylation</keyword>
<keyword id="KW-0009">Actin-binding</keyword>
<keyword id="KW-0130">Cell adhesion</keyword>
<keyword id="KW-0965">Cell junction</keyword>
<keyword id="KW-1003">Cell membrane</keyword>
<keyword id="KW-0966">Cell projection</keyword>
<keyword id="KW-0963">Cytoplasm</keyword>
<keyword id="KW-0206">Cytoskeleton</keyword>
<keyword id="KW-0449">Lipoprotein</keyword>
<keyword id="KW-0472">Membrane</keyword>
<keyword id="KW-0564">Palmitate</keyword>
<keyword id="KW-0597">Phosphoprotein</keyword>
<keyword id="KW-1185">Reference proteome</keyword>
<keyword id="KW-0677">Repeat</keyword>
<feature type="chain" id="PRO_0000349117" description="Vinculin" evidence="2">
    <location>
        <begin position="1"/>
        <end position="1066"/>
    </location>
</feature>
<feature type="repeat" description="1" evidence="4">
    <location>
        <begin position="259"/>
        <end position="369"/>
    </location>
</feature>
<feature type="repeat" description="2" evidence="4">
    <location>
        <begin position="370"/>
        <end position="479"/>
    </location>
</feature>
<feature type="repeat" description="3" evidence="4">
    <location>
        <begin position="480"/>
        <end position="589"/>
    </location>
</feature>
<feature type="region of interest" description="N-terminal globular head" evidence="2">
    <location>
        <begin position="1"/>
        <end position="835"/>
    </location>
</feature>
<feature type="region of interest" description="Talin-interaction" evidence="1">
    <location>
        <begin position="168"/>
        <end position="208"/>
    </location>
</feature>
<feature type="region of interest" description="3 X 112 AA tandem repeats" evidence="4">
    <location>
        <begin position="259"/>
        <end position="589"/>
    </location>
</feature>
<feature type="region of interest" description="Interaction with ACTN4" evidence="2">
    <location>
        <begin position="741"/>
        <end position="764"/>
    </location>
</feature>
<feature type="region of interest" description="Linker (Pro-rich)" evidence="2">
    <location>
        <begin position="836"/>
        <end position="878"/>
    </location>
</feature>
<feature type="region of interest" description="Disordered" evidence="5">
    <location>
        <begin position="857"/>
        <end position="887"/>
    </location>
</feature>
<feature type="region of interest" description="C-terminal tail" evidence="2">
    <location>
        <begin position="879"/>
        <end position="1066"/>
    </location>
</feature>
<feature type="region of interest" description="Facilitates phospholipid membrane insertion" evidence="3">
    <location>
        <begin position="935"/>
        <end position="978"/>
    </location>
</feature>
<feature type="region of interest" description="Facilitates phospholipid membrane insertion" evidence="3">
    <location>
        <begin position="1052"/>
        <end position="1066"/>
    </location>
</feature>
<feature type="compositionally biased region" description="Pro residues" evidence="5">
    <location>
        <begin position="860"/>
        <end position="876"/>
    </location>
</feature>
<feature type="modified residue" description="Phosphoserine" evidence="9">
    <location>
        <position position="97"/>
    </location>
</feature>
<feature type="modified residue" description="N6-acetyllysine" evidence="2">
    <location>
        <position position="173"/>
    </location>
</feature>
<feature type="modified residue" description="Phosphoserine" evidence="9">
    <location>
        <position position="260"/>
    </location>
</feature>
<feature type="modified residue" description="Phosphoserine" evidence="9">
    <location>
        <position position="272"/>
    </location>
</feature>
<feature type="modified residue" description="Phosphoserine" evidence="9">
    <location>
        <position position="275"/>
    </location>
</feature>
<feature type="modified residue" description="Phosphoserine" evidence="8 9">
    <location>
        <position position="290"/>
    </location>
</feature>
<feature type="modified residue" description="Phosphoserine" evidence="9">
    <location>
        <position position="346"/>
    </location>
</feature>
<feature type="modified residue" description="Phosphoserine" evidence="9">
    <location>
        <position position="434"/>
    </location>
</feature>
<feature type="modified residue" description="N6-acetyllysine" evidence="2">
    <location>
        <position position="496"/>
    </location>
</feature>
<feature type="modified residue" description="Phosphotyrosine" evidence="7">
    <location>
        <position position="537"/>
    </location>
</feature>
<feature type="modified residue" description="Phosphoserine" evidence="9">
    <location>
        <position position="574"/>
    </location>
</feature>
<feature type="modified residue" description="Phosphoserine" evidence="9">
    <location>
        <position position="579"/>
    </location>
</feature>
<feature type="modified residue" description="Phosphoserine" evidence="2">
    <location>
        <position position="600"/>
    </location>
</feature>
<feature type="modified residue" description="Phosphothreonine" evidence="2">
    <location>
        <position position="604"/>
    </location>
</feature>
<feature type="modified residue" description="Phosphothreonine" evidence="2">
    <location>
        <position position="672"/>
    </location>
</feature>
<feature type="modified residue" description="Phosphoserine" evidence="9">
    <location>
        <position position="721"/>
    </location>
</feature>
<feature type="modified residue" description="Phosphoserine" evidence="9">
    <location>
        <position position="795"/>
    </location>
</feature>
<feature type="modified residue" description="Phosphoserine" evidence="2">
    <location>
        <position position="809"/>
    </location>
</feature>
<feature type="modified residue" description="Phosphotyrosine" evidence="9">
    <location>
        <position position="822"/>
    </location>
</feature>
<feature type="modified residue" description="Phosphotyrosine; by SRC-type Tyr-kinases" evidence="2">
    <location>
        <position position="1065"/>
    </location>
</feature>
<gene>
    <name evidence="2" type="primary">Vcl</name>
</gene>
<name>VINC_RAT</name>
<protein>
    <recommendedName>
        <fullName evidence="2">Vinculin</fullName>
    </recommendedName>
    <alternativeName>
        <fullName evidence="2">Metavinculin</fullName>
    </alternativeName>
</protein>